<dbReference type="EMBL" id="S59496">
    <property type="protein sequence ID" value="AAB26385.1"/>
    <property type="molecule type" value="mRNA"/>
</dbReference>
<dbReference type="PIR" id="S32498">
    <property type="entry name" value="S32498"/>
</dbReference>
<dbReference type="GO" id="GO:0005576">
    <property type="term" value="C:extracellular region"/>
    <property type="evidence" value="ECO:0007669"/>
    <property type="project" value="UniProtKB-SubCell"/>
</dbReference>
<dbReference type="GO" id="GO:0045202">
    <property type="term" value="C:synapse"/>
    <property type="evidence" value="ECO:0007669"/>
    <property type="project" value="GOC"/>
</dbReference>
<dbReference type="GO" id="GO:0005179">
    <property type="term" value="F:hormone activity"/>
    <property type="evidence" value="ECO:0007669"/>
    <property type="project" value="UniProtKB-KW"/>
</dbReference>
<dbReference type="GO" id="GO:0007268">
    <property type="term" value="P:chemical synaptic transmission"/>
    <property type="evidence" value="ECO:0007669"/>
    <property type="project" value="UniProtKB-KW"/>
</dbReference>
<dbReference type="GO" id="GO:0009416">
    <property type="term" value="P:response to light stimulus"/>
    <property type="evidence" value="ECO:0007669"/>
    <property type="project" value="InterPro"/>
</dbReference>
<dbReference type="InterPro" id="IPR009396">
    <property type="entry name" value="Pigment_DH"/>
</dbReference>
<dbReference type="Pfam" id="PF06324">
    <property type="entry name" value="Pigment_DH"/>
    <property type="match status" value="1"/>
</dbReference>
<reference key="1">
    <citation type="journal article" date="1993" name="FEBS Lett.">
        <title>Structure and localization of mRNA encoding a pigment dispersing hormone (PDH) in the eyestalk of the crayfish Orconectes limosus.</title>
        <authorList>
            <person name="de Kleijn D.P."/>
            <person name="Linck B."/>
            <person name="Klein J.M."/>
            <person name="Weidemann W.M."/>
            <person name="Keller R."/>
            <person name="van Herp F."/>
        </authorList>
    </citation>
    <scope>NUCLEOTIDE SEQUENCE [MRNA]</scope>
    <scope>TISSUE SPECIFICITY</scope>
    <source>
        <tissue>Eyestalk</tissue>
    </source>
</reference>
<name>PDHA_FAXLI</name>
<proteinExistence type="evidence at transcript level"/>
<feature type="signal peptide" evidence="2">
    <location>
        <begin position="1"/>
        <end position="20"/>
    </location>
</feature>
<feature type="peptide" id="PRO_0000023433" description="PDH precursor-related peptide">
    <location>
        <begin position="21"/>
        <end position="53"/>
    </location>
</feature>
<feature type="peptide" id="PRO_0000023434" description="Pigment-dispersing hormone A">
    <location>
        <begin position="56"/>
        <end position="73"/>
    </location>
</feature>
<feature type="modified residue" description="Alanine amide" evidence="1">
    <location>
        <position position="73"/>
    </location>
</feature>
<evidence type="ECO:0000250" key="1"/>
<evidence type="ECO:0000255" key="2"/>
<evidence type="ECO:0000269" key="3">
    <source>
    </source>
</evidence>
<evidence type="ECO:0000305" key="4"/>
<protein>
    <recommendedName>
        <fullName>Pigment-dispersing hormone A peptides</fullName>
    </recommendedName>
    <component>
        <recommendedName>
            <fullName>PDH precursor-related peptide</fullName>
            <shortName>PRPP</shortName>
        </recommendedName>
    </component>
    <component>
        <recommendedName>
            <fullName>Pigment-dispersing hormone A</fullName>
            <shortName>PDH A</shortName>
        </recommendedName>
        <alternativeName>
            <fullName>Light-adapting distal retinal pigment hormone A</fullName>
            <shortName>DRPH A</shortName>
        </alternativeName>
    </component>
</protein>
<keyword id="KW-0027">Amidation</keyword>
<keyword id="KW-0165">Cleavage on pair of basic residues</keyword>
<keyword id="KW-0372">Hormone</keyword>
<keyword id="KW-0529">Neurotransmitter</keyword>
<keyword id="KW-0964">Secreted</keyword>
<keyword id="KW-0732">Signal</keyword>
<sequence length="76" mass="8281">MRSAMVVLVLVAMVAVFTRAQELKYPEREVVAELAAQIYGWPGSLGTMAGGPHKRNSELINSILGLPKVMNEAGRR</sequence>
<accession>P37085</accession>
<comment type="function">
    <text>The pigment-dispersing hormone causes the migration of the distal retinal pigment into the proximal end of the pigment chromatophore cells and thus decreases the amount of light entering the retinulas. May also function as a neurotransmitter and/or neuromodulator.</text>
</comment>
<comment type="subcellular location">
    <subcellularLocation>
        <location>Secreted</location>
    </subcellularLocation>
</comment>
<comment type="tissue specificity">
    <text evidence="3">Optical ganglia of the eyestalk.</text>
</comment>
<comment type="similarity">
    <text evidence="4">Belongs to the arthropod PDH family.</text>
</comment>
<organism>
    <name type="scientific">Faxonius limosus</name>
    <name type="common">Spinycheek crayfish</name>
    <name type="synonym">Orconectes limosus</name>
    <dbReference type="NCBI Taxonomy" id="28379"/>
    <lineage>
        <taxon>Eukaryota</taxon>
        <taxon>Metazoa</taxon>
        <taxon>Ecdysozoa</taxon>
        <taxon>Arthropoda</taxon>
        <taxon>Crustacea</taxon>
        <taxon>Multicrustacea</taxon>
        <taxon>Malacostraca</taxon>
        <taxon>Eumalacostraca</taxon>
        <taxon>Eucarida</taxon>
        <taxon>Decapoda</taxon>
        <taxon>Pleocyemata</taxon>
        <taxon>Astacidea</taxon>
        <taxon>Astacoidea</taxon>
        <taxon>Cambaridae</taxon>
        <taxon>Faxonius</taxon>
    </lineage>
</organism>